<accession>Q57L55</accession>
<protein>
    <recommendedName>
        <fullName evidence="1">Autonomous glycyl radical cofactor</fullName>
    </recommendedName>
</protein>
<proteinExistence type="inferred from homology"/>
<name>GRCA_SALCH</name>
<sequence>MITGIQITKAANDDLLNSFWLLDSEKGEARCIVAKSGFAEDEVVAVSKLGEIEYREIPMEVKPEVRVEGGQHLNVNVLRRETLEDAVKHPEKYPQLTIRVSGYAVRFNSLTPEQQRDVIARTFTESL</sequence>
<comment type="function">
    <text evidence="1">Acts as a radical domain for damaged PFL and possibly other radical proteins.</text>
</comment>
<dbReference type="EMBL" id="AE017220">
    <property type="protein sequence ID" value="AAX66557.1"/>
    <property type="molecule type" value="Genomic_DNA"/>
</dbReference>
<dbReference type="RefSeq" id="WP_000627811.1">
    <property type="nucleotide sequence ID" value="NC_006905.1"/>
</dbReference>
<dbReference type="SMR" id="Q57L55"/>
<dbReference type="GeneID" id="66757020"/>
<dbReference type="KEGG" id="sec:SCH_2651"/>
<dbReference type="HOGENOM" id="CLU_133780_0_0_6"/>
<dbReference type="Proteomes" id="UP000000538">
    <property type="component" value="Chromosome"/>
</dbReference>
<dbReference type="GO" id="GO:0005829">
    <property type="term" value="C:cytosol"/>
    <property type="evidence" value="ECO:0007669"/>
    <property type="project" value="TreeGrafter"/>
</dbReference>
<dbReference type="GO" id="GO:0008861">
    <property type="term" value="F:formate C-acetyltransferase activity"/>
    <property type="evidence" value="ECO:0007669"/>
    <property type="project" value="TreeGrafter"/>
</dbReference>
<dbReference type="FunFam" id="3.20.70.20:FF:000002">
    <property type="entry name" value="Autonomous glycyl radical cofactor"/>
    <property type="match status" value="1"/>
</dbReference>
<dbReference type="Gene3D" id="3.20.70.20">
    <property type="match status" value="1"/>
</dbReference>
<dbReference type="HAMAP" id="MF_00806">
    <property type="entry name" value="GrcA"/>
    <property type="match status" value="1"/>
</dbReference>
<dbReference type="InterPro" id="IPR050244">
    <property type="entry name" value="Auton_GlycylRad_Cofactor"/>
</dbReference>
<dbReference type="InterPro" id="IPR019777">
    <property type="entry name" value="Form_AcTrfase_GR_CS"/>
</dbReference>
<dbReference type="InterPro" id="IPR001150">
    <property type="entry name" value="Gly_radical"/>
</dbReference>
<dbReference type="InterPro" id="IPR011140">
    <property type="entry name" value="Glycyl_radical_cofactor_GrcA"/>
</dbReference>
<dbReference type="NCBIfam" id="TIGR04365">
    <property type="entry name" value="spare_glycyl"/>
    <property type="match status" value="1"/>
</dbReference>
<dbReference type="PANTHER" id="PTHR30191">
    <property type="entry name" value="FORMATE ACETYLTRANSFERASE"/>
    <property type="match status" value="1"/>
</dbReference>
<dbReference type="PANTHER" id="PTHR30191:SF0">
    <property type="entry name" value="FORMATE ACETYLTRANSFERASE 1"/>
    <property type="match status" value="1"/>
</dbReference>
<dbReference type="Pfam" id="PF01228">
    <property type="entry name" value="Gly_radical"/>
    <property type="match status" value="1"/>
</dbReference>
<dbReference type="PIRSF" id="PIRSF000378">
    <property type="entry name" value="Gly_radicl_yfiD"/>
    <property type="match status" value="1"/>
</dbReference>
<dbReference type="SUPFAM" id="SSF51998">
    <property type="entry name" value="PFL-like glycyl radical enzymes"/>
    <property type="match status" value="1"/>
</dbReference>
<dbReference type="PROSITE" id="PS00850">
    <property type="entry name" value="GLY_RADICAL_1"/>
    <property type="match status" value="1"/>
</dbReference>
<dbReference type="PROSITE" id="PS51149">
    <property type="entry name" value="GLY_RADICAL_2"/>
    <property type="match status" value="1"/>
</dbReference>
<organism>
    <name type="scientific">Salmonella choleraesuis (strain SC-B67)</name>
    <dbReference type="NCBI Taxonomy" id="321314"/>
    <lineage>
        <taxon>Bacteria</taxon>
        <taxon>Pseudomonadati</taxon>
        <taxon>Pseudomonadota</taxon>
        <taxon>Gammaproteobacteria</taxon>
        <taxon>Enterobacterales</taxon>
        <taxon>Enterobacteriaceae</taxon>
        <taxon>Salmonella</taxon>
    </lineage>
</organism>
<feature type="chain" id="PRO_1000083731" description="Autonomous glycyl radical cofactor">
    <location>
        <begin position="1"/>
        <end position="127"/>
    </location>
</feature>
<feature type="domain" description="Glycine radical" evidence="1">
    <location>
        <begin position="5"/>
        <end position="127"/>
    </location>
</feature>
<feature type="modified residue" description="Glycine radical" evidence="1">
    <location>
        <position position="102"/>
    </location>
</feature>
<gene>
    <name evidence="1" type="primary">grcA</name>
    <name type="ordered locus">SCH_2651</name>
</gene>
<reference key="1">
    <citation type="journal article" date="2005" name="Nucleic Acids Res.">
        <title>The genome sequence of Salmonella enterica serovar Choleraesuis, a highly invasive and resistant zoonotic pathogen.</title>
        <authorList>
            <person name="Chiu C.-H."/>
            <person name="Tang P."/>
            <person name="Chu C."/>
            <person name="Hu S."/>
            <person name="Bao Q."/>
            <person name="Yu J."/>
            <person name="Chou Y.-Y."/>
            <person name="Wang H.-S."/>
            <person name="Lee Y.-S."/>
        </authorList>
    </citation>
    <scope>NUCLEOTIDE SEQUENCE [LARGE SCALE GENOMIC DNA]</scope>
    <source>
        <strain>SC-B67</strain>
    </source>
</reference>
<keyword id="KW-0556">Organic radical</keyword>
<evidence type="ECO:0000255" key="1">
    <source>
        <dbReference type="HAMAP-Rule" id="MF_00806"/>
    </source>
</evidence>